<proteinExistence type="inferred from homology"/>
<accession>Q7MWL6</accession>
<name>RL31B_PORGI</name>
<feature type="chain" id="PRO_0000173246" description="Large ribosomal subunit protein bL31B">
    <location>
        <begin position="1"/>
        <end position="85"/>
    </location>
</feature>
<dbReference type="EMBL" id="AE015924">
    <property type="protein sequence ID" value="AAQ65778.1"/>
    <property type="molecule type" value="Genomic_DNA"/>
</dbReference>
<dbReference type="RefSeq" id="WP_004585129.1">
    <property type="nucleotide sequence ID" value="NC_002950.2"/>
</dbReference>
<dbReference type="SMR" id="Q7MWL6"/>
<dbReference type="STRING" id="242619.PG_0592"/>
<dbReference type="EnsemblBacteria" id="AAQ65778">
    <property type="protein sequence ID" value="AAQ65778"/>
    <property type="gene ID" value="PG_0592"/>
</dbReference>
<dbReference type="GeneID" id="29255862"/>
<dbReference type="KEGG" id="pgi:PG_0592"/>
<dbReference type="eggNOG" id="COG0254">
    <property type="taxonomic scope" value="Bacteria"/>
</dbReference>
<dbReference type="HOGENOM" id="CLU_114306_2_2_10"/>
<dbReference type="Proteomes" id="UP000000588">
    <property type="component" value="Chromosome"/>
</dbReference>
<dbReference type="GO" id="GO:1990904">
    <property type="term" value="C:ribonucleoprotein complex"/>
    <property type="evidence" value="ECO:0007669"/>
    <property type="project" value="UniProtKB-KW"/>
</dbReference>
<dbReference type="GO" id="GO:0005840">
    <property type="term" value="C:ribosome"/>
    <property type="evidence" value="ECO:0007669"/>
    <property type="project" value="UniProtKB-KW"/>
</dbReference>
<dbReference type="GO" id="GO:0003735">
    <property type="term" value="F:structural constituent of ribosome"/>
    <property type="evidence" value="ECO:0007669"/>
    <property type="project" value="InterPro"/>
</dbReference>
<dbReference type="GO" id="GO:0006412">
    <property type="term" value="P:translation"/>
    <property type="evidence" value="ECO:0007669"/>
    <property type="project" value="UniProtKB-UniRule"/>
</dbReference>
<dbReference type="Gene3D" id="4.10.830.30">
    <property type="entry name" value="Ribosomal protein L31"/>
    <property type="match status" value="1"/>
</dbReference>
<dbReference type="HAMAP" id="MF_00502">
    <property type="entry name" value="Ribosomal_bL31_2"/>
    <property type="match status" value="1"/>
</dbReference>
<dbReference type="InterPro" id="IPR034704">
    <property type="entry name" value="Ribosomal_bL28/bL31-like_sf"/>
</dbReference>
<dbReference type="InterPro" id="IPR002150">
    <property type="entry name" value="Ribosomal_bL31"/>
</dbReference>
<dbReference type="InterPro" id="IPR027493">
    <property type="entry name" value="Ribosomal_bL31_B"/>
</dbReference>
<dbReference type="InterPro" id="IPR042105">
    <property type="entry name" value="Ribosomal_bL31_sf"/>
</dbReference>
<dbReference type="NCBIfam" id="TIGR00105">
    <property type="entry name" value="L31"/>
    <property type="match status" value="1"/>
</dbReference>
<dbReference type="NCBIfam" id="NF002462">
    <property type="entry name" value="PRK01678.1"/>
    <property type="match status" value="1"/>
</dbReference>
<dbReference type="PANTHER" id="PTHR33280">
    <property type="entry name" value="50S RIBOSOMAL PROTEIN L31, CHLOROPLASTIC"/>
    <property type="match status" value="1"/>
</dbReference>
<dbReference type="PANTHER" id="PTHR33280:SF1">
    <property type="entry name" value="LARGE RIBOSOMAL SUBUNIT PROTEIN BL31C"/>
    <property type="match status" value="1"/>
</dbReference>
<dbReference type="Pfam" id="PF01197">
    <property type="entry name" value="Ribosomal_L31"/>
    <property type="match status" value="1"/>
</dbReference>
<dbReference type="PRINTS" id="PR01249">
    <property type="entry name" value="RIBOSOMALL31"/>
</dbReference>
<dbReference type="SUPFAM" id="SSF143800">
    <property type="entry name" value="L28p-like"/>
    <property type="match status" value="1"/>
</dbReference>
<dbReference type="PROSITE" id="PS01143">
    <property type="entry name" value="RIBOSOMAL_L31"/>
    <property type="match status" value="1"/>
</dbReference>
<protein>
    <recommendedName>
        <fullName evidence="1">Large ribosomal subunit protein bL31B</fullName>
    </recommendedName>
    <alternativeName>
        <fullName evidence="2">50S ribosomal protein L31 type B</fullName>
    </alternativeName>
</protein>
<comment type="subunit">
    <text evidence="1">Part of the 50S ribosomal subunit.</text>
</comment>
<comment type="similarity">
    <text evidence="1">Belongs to the bacterial ribosomal protein bL31 family. Type B subfamily.</text>
</comment>
<reference key="1">
    <citation type="journal article" date="2003" name="J. Bacteriol.">
        <title>Complete genome sequence of the oral pathogenic bacterium Porphyromonas gingivalis strain W83.</title>
        <authorList>
            <person name="Nelson K.E."/>
            <person name="Fleischmann R.D."/>
            <person name="DeBoy R.T."/>
            <person name="Paulsen I.T."/>
            <person name="Fouts D.E."/>
            <person name="Eisen J.A."/>
            <person name="Daugherty S.C."/>
            <person name="Dodson R.J."/>
            <person name="Durkin A.S."/>
            <person name="Gwinn M.L."/>
            <person name="Haft D.H."/>
            <person name="Kolonay J.F."/>
            <person name="Nelson W.C."/>
            <person name="Mason T.M."/>
            <person name="Tallon L."/>
            <person name="Gray J."/>
            <person name="Granger D."/>
            <person name="Tettelin H."/>
            <person name="Dong H."/>
            <person name="Galvin J.L."/>
            <person name="Duncan M.J."/>
            <person name="Dewhirst F.E."/>
            <person name="Fraser C.M."/>
        </authorList>
    </citation>
    <scope>NUCLEOTIDE SEQUENCE [LARGE SCALE GENOMIC DNA]</scope>
    <source>
        <strain>ATCC BAA-308 / W83</strain>
    </source>
</reference>
<organism>
    <name type="scientific">Porphyromonas gingivalis (strain ATCC BAA-308 / W83)</name>
    <dbReference type="NCBI Taxonomy" id="242619"/>
    <lineage>
        <taxon>Bacteria</taxon>
        <taxon>Pseudomonadati</taxon>
        <taxon>Bacteroidota</taxon>
        <taxon>Bacteroidia</taxon>
        <taxon>Bacteroidales</taxon>
        <taxon>Porphyromonadaceae</taxon>
        <taxon>Porphyromonas</taxon>
    </lineage>
</organism>
<evidence type="ECO:0000255" key="1">
    <source>
        <dbReference type="HAMAP-Rule" id="MF_00502"/>
    </source>
</evidence>
<evidence type="ECO:0000305" key="2"/>
<keyword id="KW-1185">Reference proteome</keyword>
<keyword id="KW-0687">Ribonucleoprotein</keyword>
<keyword id="KW-0689">Ribosomal protein</keyword>
<sequence length="85" mass="9798">MKKGIHPENYRPVVFKDMSNEDIFITRSTMEAKETIEIDGVTYPLIKVEISNTSHPFFTGKAKLVDTAGRVDKFMSRYGDRNKKK</sequence>
<gene>
    <name evidence="1" type="primary">rpmE2</name>
    <name type="synonym">rpmE</name>
    <name type="ordered locus">PG_0592</name>
</gene>